<feature type="chain" id="PRO_0000054496" description="Alcohol dehydrogenase">
    <location>
        <begin position="1"/>
        <end position="254"/>
    </location>
</feature>
<feature type="active site" description="Proton acceptor" evidence="2">
    <location>
        <position position="151"/>
    </location>
</feature>
<feature type="binding site" evidence="1">
    <location>
        <begin position="10"/>
        <end position="33"/>
    </location>
    <ligand>
        <name>NAD(+)</name>
        <dbReference type="ChEBI" id="CHEBI:57540"/>
    </ligand>
</feature>
<feature type="binding site" evidence="1">
    <location>
        <position position="138"/>
    </location>
    <ligand>
        <name>substrate</name>
    </ligand>
</feature>
<gene>
    <name type="primary">Adh</name>
</gene>
<sequence length="254" mass="27568">MSLTNKNVVFVAGLGGIGLDTSRELVKRDLKNLVILDRIDNAAAIAELKAINPKVTVTFYPYDVTVPVAETTKLLKTIFAQIKTIDVLINGAGILDDHQIERTIAVNYSGLVNTTTAILDFWDKRKGGPGGIICNIGSVTGFNAIYQVPVYSGSKAAVVNFTSSLAKLAPITGVTAYTVNPGITKTTLVHKFNSWLDVEPRVAEKLLEHPTQTSQQCAENFVKAIELNKNGAIWKLDLGTLESITWTKHWDSGI</sequence>
<keyword id="KW-0520">NAD</keyword>
<keyword id="KW-0560">Oxidoreductase</keyword>
<evidence type="ECO:0000250" key="1"/>
<evidence type="ECO:0000255" key="2">
    <source>
        <dbReference type="PROSITE-ProRule" id="PRU10001"/>
    </source>
</evidence>
<evidence type="ECO:0000305" key="3"/>
<organism>
    <name type="scientific">Drosophila subobscura</name>
    <name type="common">Fruit fly</name>
    <dbReference type="NCBI Taxonomy" id="7241"/>
    <lineage>
        <taxon>Eukaryota</taxon>
        <taxon>Metazoa</taxon>
        <taxon>Ecdysozoa</taxon>
        <taxon>Arthropoda</taxon>
        <taxon>Hexapoda</taxon>
        <taxon>Insecta</taxon>
        <taxon>Pterygota</taxon>
        <taxon>Neoptera</taxon>
        <taxon>Endopterygota</taxon>
        <taxon>Diptera</taxon>
        <taxon>Brachycera</taxon>
        <taxon>Muscomorpha</taxon>
        <taxon>Ephydroidea</taxon>
        <taxon>Drosophilidae</taxon>
        <taxon>Drosophila</taxon>
        <taxon>Sophophora</taxon>
    </lineage>
</organism>
<dbReference type="EC" id="1.1.1.1"/>
<dbReference type="EMBL" id="M55545">
    <property type="protein sequence ID" value="AAA28339.1"/>
    <property type="molecule type" value="Genomic_DNA"/>
</dbReference>
<dbReference type="PIR" id="A42180">
    <property type="entry name" value="A42180"/>
</dbReference>
<dbReference type="SMR" id="Q03384"/>
<dbReference type="GO" id="GO:0005829">
    <property type="term" value="C:cytosol"/>
    <property type="evidence" value="ECO:0007669"/>
    <property type="project" value="TreeGrafter"/>
</dbReference>
<dbReference type="GO" id="GO:0004022">
    <property type="term" value="F:alcohol dehydrogenase (NAD+) activity"/>
    <property type="evidence" value="ECO:0007669"/>
    <property type="project" value="UniProtKB-EC"/>
</dbReference>
<dbReference type="GO" id="GO:0006066">
    <property type="term" value="P:alcohol metabolic process"/>
    <property type="evidence" value="ECO:0007669"/>
    <property type="project" value="InterPro"/>
</dbReference>
<dbReference type="CDD" id="cd05323">
    <property type="entry name" value="ADH_SDR_c_like"/>
    <property type="match status" value="1"/>
</dbReference>
<dbReference type="FunFam" id="3.40.50.720:FF:000302">
    <property type="entry name" value="Alcohol dehydrogenase"/>
    <property type="match status" value="1"/>
</dbReference>
<dbReference type="Gene3D" id="3.40.50.720">
    <property type="entry name" value="NAD(P)-binding Rossmann-like Domain"/>
    <property type="match status" value="1"/>
</dbReference>
<dbReference type="InterPro" id="IPR002425">
    <property type="entry name" value="ADH_Drosophila-type"/>
</dbReference>
<dbReference type="InterPro" id="IPR036291">
    <property type="entry name" value="NAD(P)-bd_dom_sf"/>
</dbReference>
<dbReference type="InterPro" id="IPR020904">
    <property type="entry name" value="Sc_DH/Rdtase_CS"/>
</dbReference>
<dbReference type="InterPro" id="IPR002347">
    <property type="entry name" value="SDR_fam"/>
</dbReference>
<dbReference type="PANTHER" id="PTHR42901">
    <property type="entry name" value="ALCOHOL DEHYDROGENASE"/>
    <property type="match status" value="1"/>
</dbReference>
<dbReference type="PANTHER" id="PTHR42901:SF1">
    <property type="entry name" value="ALCOHOL DEHYDROGENASE"/>
    <property type="match status" value="1"/>
</dbReference>
<dbReference type="Pfam" id="PF00106">
    <property type="entry name" value="adh_short"/>
    <property type="match status" value="1"/>
</dbReference>
<dbReference type="PRINTS" id="PR01168">
    <property type="entry name" value="ALCDHDRGNASE"/>
</dbReference>
<dbReference type="PRINTS" id="PR01167">
    <property type="entry name" value="INSADHFAMILY"/>
</dbReference>
<dbReference type="PRINTS" id="PR00080">
    <property type="entry name" value="SDRFAMILY"/>
</dbReference>
<dbReference type="SUPFAM" id="SSF51735">
    <property type="entry name" value="NAD(P)-binding Rossmann-fold domains"/>
    <property type="match status" value="1"/>
</dbReference>
<dbReference type="PROSITE" id="PS00061">
    <property type="entry name" value="ADH_SHORT"/>
    <property type="match status" value="1"/>
</dbReference>
<protein>
    <recommendedName>
        <fullName>Alcohol dehydrogenase</fullName>
        <ecNumber>1.1.1.1</ecNumber>
    </recommendedName>
</protein>
<proteinExistence type="inferred from homology"/>
<name>ADH_DROSU</name>
<reference key="1">
    <citation type="journal article" date="1992" name="Mol. Biol. Evol.">
        <title>The Drosophila subobscura Adh genomic region contains valuable evolutionary markers.</title>
        <authorList>
            <person name="Marfany G."/>
            <person name="Gonzalez-Duarte R."/>
        </authorList>
    </citation>
    <scope>NUCLEOTIDE SEQUENCE [GENOMIC DNA]</scope>
</reference>
<accession>Q03384</accession>
<accession>Q27632</accession>
<comment type="catalytic activity">
    <reaction evidence="2">
        <text>a primary alcohol + NAD(+) = an aldehyde + NADH + H(+)</text>
        <dbReference type="Rhea" id="RHEA:10736"/>
        <dbReference type="ChEBI" id="CHEBI:15378"/>
        <dbReference type="ChEBI" id="CHEBI:15734"/>
        <dbReference type="ChEBI" id="CHEBI:17478"/>
        <dbReference type="ChEBI" id="CHEBI:57540"/>
        <dbReference type="ChEBI" id="CHEBI:57945"/>
        <dbReference type="EC" id="1.1.1.1"/>
    </reaction>
</comment>
<comment type="catalytic activity">
    <reaction evidence="2">
        <text>a secondary alcohol + NAD(+) = a ketone + NADH + H(+)</text>
        <dbReference type="Rhea" id="RHEA:10740"/>
        <dbReference type="ChEBI" id="CHEBI:15378"/>
        <dbReference type="ChEBI" id="CHEBI:17087"/>
        <dbReference type="ChEBI" id="CHEBI:35681"/>
        <dbReference type="ChEBI" id="CHEBI:57540"/>
        <dbReference type="ChEBI" id="CHEBI:57945"/>
        <dbReference type="EC" id="1.1.1.1"/>
    </reaction>
</comment>
<comment type="subunit">
    <text>Homodimer.</text>
</comment>
<comment type="similarity">
    <text evidence="3">Belongs to the short-chain dehydrogenases/reductases (SDR) family.</text>
</comment>